<sequence>MKYLILSLVANLLVFGVLSAIGLNINILAAMMIVLVIPIMISGILFFKTNIDKTYIFFNIIFIDFYYYIYNVHLMTLPKFNNYIKAEMMELEDIDVLITSKDFGFDEILFYTLYLLLILIVLYYLKKQVKHKI</sequence>
<accession>Q7A5P4</accession>
<dbReference type="EMBL" id="BA000018">
    <property type="protein sequence ID" value="BAB42493.1"/>
    <property type="molecule type" value="Genomic_DNA"/>
</dbReference>
<dbReference type="PIR" id="A89917">
    <property type="entry name" value="A89917"/>
</dbReference>
<dbReference type="RefSeq" id="WP_000876201.1">
    <property type="nucleotide sequence ID" value="NC_002745.2"/>
</dbReference>
<dbReference type="SMR" id="Q7A5P4"/>
<dbReference type="EnsemblBacteria" id="BAB42493">
    <property type="protein sequence ID" value="BAB42493"/>
    <property type="gene ID" value="BAB42493"/>
</dbReference>
<dbReference type="KEGG" id="sau:SA1233"/>
<dbReference type="HOGENOM" id="CLU_157294_0_0_9"/>
<dbReference type="GO" id="GO:0005886">
    <property type="term" value="C:plasma membrane"/>
    <property type="evidence" value="ECO:0007669"/>
    <property type="project" value="UniProtKB-SubCell"/>
</dbReference>
<dbReference type="NCBIfam" id="NF038270">
    <property type="entry name" value="membran_MsaC"/>
    <property type="match status" value="1"/>
</dbReference>
<evidence type="ECO:0000250" key="1"/>
<evidence type="ECO:0000255" key="2"/>
<evidence type="ECO:0000305" key="3"/>
<keyword id="KW-1003">Cell membrane</keyword>
<keyword id="KW-0472">Membrane</keyword>
<keyword id="KW-0812">Transmembrane</keyword>
<keyword id="KW-1133">Transmembrane helix</keyword>
<name>MSA_STAAN</name>
<feature type="chain" id="PRO_0000253060" description="Protein msa">
    <location>
        <begin position="1"/>
        <end position="133"/>
    </location>
</feature>
<feature type="transmembrane region" description="Helical" evidence="2">
    <location>
        <begin position="3"/>
        <end position="23"/>
    </location>
</feature>
<feature type="transmembrane region" description="Helical" evidence="2">
    <location>
        <begin position="27"/>
        <end position="47"/>
    </location>
</feature>
<feature type="transmembrane region" description="Helical" evidence="2">
    <location>
        <begin position="55"/>
        <end position="75"/>
    </location>
</feature>
<feature type="transmembrane region" description="Helical" evidence="2">
    <location>
        <begin position="103"/>
        <end position="123"/>
    </location>
</feature>
<gene>
    <name type="primary">msa</name>
    <name type="ordered locus">SA1233</name>
</gene>
<organism>
    <name type="scientific">Staphylococcus aureus (strain N315)</name>
    <dbReference type="NCBI Taxonomy" id="158879"/>
    <lineage>
        <taxon>Bacteria</taxon>
        <taxon>Bacillati</taxon>
        <taxon>Bacillota</taxon>
        <taxon>Bacilli</taxon>
        <taxon>Bacillales</taxon>
        <taxon>Staphylococcaceae</taxon>
        <taxon>Staphylococcus</taxon>
    </lineage>
</organism>
<proteinExistence type="inferred from homology"/>
<comment type="function">
    <text evidence="1">Accessory element involved in the expression of sarA and several virulence factors. Modulates SarA production and/or function in a strain-dependent manner. Affects the transcription of the accessory gene regulator (agr) and genes encoding virulence factors including alpha toxin (hla) and protein A (spa) (By similarity).</text>
</comment>
<comment type="subcellular location">
    <subcellularLocation>
        <location evidence="3">Cell membrane</location>
        <topology evidence="3">Multi-pass membrane protein</topology>
    </subcellularLocation>
</comment>
<reference key="1">
    <citation type="journal article" date="2001" name="Lancet">
        <title>Whole genome sequencing of meticillin-resistant Staphylococcus aureus.</title>
        <authorList>
            <person name="Kuroda M."/>
            <person name="Ohta T."/>
            <person name="Uchiyama I."/>
            <person name="Baba T."/>
            <person name="Yuzawa H."/>
            <person name="Kobayashi I."/>
            <person name="Cui L."/>
            <person name="Oguchi A."/>
            <person name="Aoki K."/>
            <person name="Nagai Y."/>
            <person name="Lian J.-Q."/>
            <person name="Ito T."/>
            <person name="Kanamori M."/>
            <person name="Matsumaru H."/>
            <person name="Maruyama A."/>
            <person name="Murakami H."/>
            <person name="Hosoyama A."/>
            <person name="Mizutani-Ui Y."/>
            <person name="Takahashi N.K."/>
            <person name="Sawano T."/>
            <person name="Inoue R."/>
            <person name="Kaito C."/>
            <person name="Sekimizu K."/>
            <person name="Hirakawa H."/>
            <person name="Kuhara S."/>
            <person name="Goto S."/>
            <person name="Yabuzaki J."/>
            <person name="Kanehisa M."/>
            <person name="Yamashita A."/>
            <person name="Oshima K."/>
            <person name="Furuya K."/>
            <person name="Yoshino C."/>
            <person name="Shiba T."/>
            <person name="Hattori M."/>
            <person name="Ogasawara N."/>
            <person name="Hayashi H."/>
            <person name="Hiramatsu K."/>
        </authorList>
    </citation>
    <scope>NUCLEOTIDE SEQUENCE [LARGE SCALE GENOMIC DNA]</scope>
    <source>
        <strain>N315</strain>
    </source>
</reference>
<protein>
    <recommendedName>
        <fullName>Protein msa</fullName>
    </recommendedName>
    <alternativeName>
        <fullName>Modulator of SarA</fullName>
    </alternativeName>
</protein>